<keyword id="KW-0002">3D-structure</keyword>
<keyword id="KW-0004">4Fe-4S</keyword>
<keyword id="KW-0903">Direct protein sequencing</keyword>
<keyword id="KW-0249">Electron transport</keyword>
<keyword id="KW-0408">Iron</keyword>
<keyword id="KW-0411">Iron-sulfur</keyword>
<keyword id="KW-0472">Membrane</keyword>
<keyword id="KW-0479">Metal-binding</keyword>
<keyword id="KW-0496">Mitochondrion</keyword>
<keyword id="KW-0999">Mitochondrion inner membrane</keyword>
<keyword id="KW-0520">NAD</keyword>
<keyword id="KW-0560">Oxidoreductase</keyword>
<keyword id="KW-1185">Reference proteome</keyword>
<keyword id="KW-0677">Repeat</keyword>
<keyword id="KW-0679">Respiratory chain</keyword>
<keyword id="KW-0809">Transit peptide</keyword>
<keyword id="KW-1278">Translocase</keyword>
<keyword id="KW-0813">Transport</keyword>
<keyword id="KW-0830">Ubiquinone</keyword>
<evidence type="ECO:0000250" key="1">
    <source>
        <dbReference type="UniProtKB" id="O00217"/>
    </source>
</evidence>
<evidence type="ECO:0000250" key="2">
    <source>
        <dbReference type="UniProtKB" id="Q56224"/>
    </source>
</evidence>
<evidence type="ECO:0000255" key="3">
    <source>
        <dbReference type="PROSITE-ProRule" id="PRU00711"/>
    </source>
</evidence>
<evidence type="ECO:0000269" key="4">
    <source>
    </source>
</evidence>
<evidence type="ECO:0000269" key="5">
    <source>
    </source>
</evidence>
<evidence type="ECO:0000269" key="6">
    <source>
    </source>
</evidence>
<evidence type="ECO:0000269" key="7">
    <source>
    </source>
</evidence>
<evidence type="ECO:0000305" key="8"/>
<evidence type="ECO:0000305" key="9">
    <source>
    </source>
</evidence>
<evidence type="ECO:0007829" key="10">
    <source>
        <dbReference type="PDB" id="7QSM"/>
    </source>
</evidence>
<evidence type="ECO:0007829" key="11">
    <source>
        <dbReference type="PDB" id="8Q0F"/>
    </source>
</evidence>
<evidence type="ECO:0007829" key="12">
    <source>
        <dbReference type="PDB" id="8Q1Y"/>
    </source>
</evidence>
<sequence>MRCLTMPMLLRALAQAQAARAGHASVRGLHSSAVAATYKYVNLREPSMDMKSVTDRAAQTLLWTELIRGLGMTLSYLFREPATINYPFEKGPLSPRFRGEHALRRYPSGEERCIACKLCEAVCPAQAITIEAEPRADGSRRTTRYDIDMTKCIYCGFCQEACPVDAIVEGPNFEFSTETHEELLYNKEKLLNNGDKWEAEIAANIQADYLYR</sequence>
<proteinExistence type="evidence at protein level"/>
<protein>
    <recommendedName>
        <fullName>NADH dehydrogenase [ubiquinone] iron-sulfur protein 8, mitochondrial</fullName>
        <ecNumber evidence="1">7.1.1.2</ecNumber>
    </recommendedName>
    <alternativeName>
        <fullName>Complex I-23kD</fullName>
        <shortName>CI-23kD</shortName>
    </alternativeName>
    <alternativeName>
        <fullName>NADH-ubiquinone oxidoreductase 23 kDa subunit</fullName>
    </alternativeName>
    <alternativeName>
        <fullName>TYKY subunit</fullName>
    </alternativeName>
</protein>
<organism>
    <name type="scientific">Bos taurus</name>
    <name type="common">Bovine</name>
    <dbReference type="NCBI Taxonomy" id="9913"/>
    <lineage>
        <taxon>Eukaryota</taxon>
        <taxon>Metazoa</taxon>
        <taxon>Chordata</taxon>
        <taxon>Craniata</taxon>
        <taxon>Vertebrata</taxon>
        <taxon>Euteleostomi</taxon>
        <taxon>Mammalia</taxon>
        <taxon>Eutheria</taxon>
        <taxon>Laurasiatheria</taxon>
        <taxon>Artiodactyla</taxon>
        <taxon>Ruminantia</taxon>
        <taxon>Pecora</taxon>
        <taxon>Bovidae</taxon>
        <taxon>Bovinae</taxon>
        <taxon>Bos</taxon>
    </lineage>
</organism>
<accession>P42028</accession>
<accession>Q32KV7</accession>
<name>NDUS8_BOVIN</name>
<feature type="transit peptide" description="Mitochondrion" evidence="6">
    <location>
        <begin position="1"/>
        <end position="36"/>
    </location>
</feature>
<feature type="chain" id="PRO_0000020011" description="NADH dehydrogenase [ubiquinone] iron-sulfur protein 8, mitochondrial">
    <location>
        <begin position="37"/>
        <end position="212"/>
    </location>
</feature>
<feature type="domain" description="4Fe-4S ferredoxin-type 1" evidence="3">
    <location>
        <begin position="104"/>
        <end position="133"/>
    </location>
</feature>
<feature type="domain" description="4Fe-4S ferredoxin-type 2" evidence="3">
    <location>
        <begin position="143"/>
        <end position="172"/>
    </location>
</feature>
<feature type="binding site" evidence="3">
    <location>
        <position position="113"/>
    </location>
    <ligand>
        <name>[4Fe-4S] cluster</name>
        <dbReference type="ChEBI" id="CHEBI:49883"/>
        <label>1</label>
    </ligand>
</feature>
<feature type="binding site" evidence="3">
    <location>
        <position position="116"/>
    </location>
    <ligand>
        <name>[4Fe-4S] cluster</name>
        <dbReference type="ChEBI" id="CHEBI:49883"/>
        <label>1</label>
    </ligand>
</feature>
<feature type="binding site" evidence="3">
    <location>
        <position position="119"/>
    </location>
    <ligand>
        <name>[4Fe-4S] cluster</name>
        <dbReference type="ChEBI" id="CHEBI:49883"/>
        <label>1</label>
    </ligand>
</feature>
<feature type="binding site" evidence="3">
    <location>
        <position position="123"/>
    </location>
    <ligand>
        <name>[4Fe-4S] cluster</name>
        <dbReference type="ChEBI" id="CHEBI:49883"/>
        <label>2</label>
    </ligand>
</feature>
<feature type="binding site" evidence="3">
    <location>
        <position position="152"/>
    </location>
    <ligand>
        <name>[4Fe-4S] cluster</name>
        <dbReference type="ChEBI" id="CHEBI:49883"/>
        <label>2</label>
    </ligand>
</feature>
<feature type="binding site" evidence="3">
    <location>
        <position position="155"/>
    </location>
    <ligand>
        <name>[4Fe-4S] cluster</name>
        <dbReference type="ChEBI" id="CHEBI:49883"/>
        <label>2</label>
    </ligand>
</feature>
<feature type="binding site" evidence="3">
    <location>
        <position position="158"/>
    </location>
    <ligand>
        <name>[4Fe-4S] cluster</name>
        <dbReference type="ChEBI" id="CHEBI:49883"/>
        <label>2</label>
    </ligand>
</feature>
<feature type="binding site" evidence="3">
    <location>
        <position position="162"/>
    </location>
    <ligand>
        <name>[4Fe-4S] cluster</name>
        <dbReference type="ChEBI" id="CHEBI:49883"/>
        <label>1</label>
    </ligand>
</feature>
<feature type="sequence conflict" description="In Ref. 2; AAI09907." evidence="8" ref="2">
    <original>T</original>
    <variation>I</variation>
    <location>
        <position position="129"/>
    </location>
</feature>
<feature type="strand" evidence="10">
    <location>
        <begin position="38"/>
        <end position="42"/>
    </location>
</feature>
<feature type="helix" evidence="10">
    <location>
        <begin position="50"/>
        <end position="62"/>
    </location>
</feature>
<feature type="helix" evidence="10">
    <location>
        <begin position="64"/>
        <end position="77"/>
    </location>
</feature>
<feature type="turn" evidence="10">
    <location>
        <begin position="86"/>
        <end position="88"/>
    </location>
</feature>
<feature type="strand" evidence="10">
    <location>
        <begin position="100"/>
        <end position="103"/>
    </location>
</feature>
<feature type="strand" evidence="11">
    <location>
        <begin position="107"/>
        <end position="109"/>
    </location>
</feature>
<feature type="helix" evidence="10">
    <location>
        <begin position="118"/>
        <end position="122"/>
    </location>
</feature>
<feature type="strand" evidence="10">
    <location>
        <begin position="128"/>
        <end position="134"/>
    </location>
</feature>
<feature type="strand" evidence="10">
    <location>
        <begin position="140"/>
        <end position="148"/>
    </location>
</feature>
<feature type="turn" evidence="10">
    <location>
        <begin position="149"/>
        <end position="151"/>
    </location>
</feature>
<feature type="helix" evidence="10">
    <location>
        <begin position="157"/>
        <end position="161"/>
    </location>
</feature>
<feature type="strand" evidence="12">
    <location>
        <begin position="163"/>
        <end position="165"/>
    </location>
</feature>
<feature type="strand" evidence="10">
    <location>
        <begin position="167"/>
        <end position="169"/>
    </location>
</feature>
<feature type="strand" evidence="10">
    <location>
        <begin position="177"/>
        <end position="180"/>
    </location>
</feature>
<feature type="helix" evidence="10">
    <location>
        <begin position="181"/>
        <end position="183"/>
    </location>
</feature>
<feature type="helix" evidence="10">
    <location>
        <begin position="187"/>
        <end position="208"/>
    </location>
</feature>
<feature type="helix" evidence="10">
    <location>
        <begin position="209"/>
        <end position="211"/>
    </location>
</feature>
<comment type="function">
    <text evidence="1 4 5">Core subunit of the mitochondrial membrane respiratory chain NADH dehydrogenase (Complex I) which catalyzes electron transfer from NADH through the respiratory chain, using ubiquinone as an electron acceptor (PubMed:10852722, PubMed:18721790). Essential for the catalytic activity and assembly of complex I (By similarity).</text>
</comment>
<comment type="catalytic activity">
    <reaction evidence="1">
        <text>a ubiquinone + NADH + 5 H(+)(in) = a ubiquinol + NAD(+) + 4 H(+)(out)</text>
        <dbReference type="Rhea" id="RHEA:29091"/>
        <dbReference type="Rhea" id="RHEA-COMP:9565"/>
        <dbReference type="Rhea" id="RHEA-COMP:9566"/>
        <dbReference type="ChEBI" id="CHEBI:15378"/>
        <dbReference type="ChEBI" id="CHEBI:16389"/>
        <dbReference type="ChEBI" id="CHEBI:17976"/>
        <dbReference type="ChEBI" id="CHEBI:57540"/>
        <dbReference type="ChEBI" id="CHEBI:57945"/>
        <dbReference type="EC" id="7.1.1.2"/>
    </reaction>
</comment>
<comment type="cofactor">
    <cofactor evidence="2">
        <name>[4Fe-4S] cluster</name>
        <dbReference type="ChEBI" id="CHEBI:49883"/>
    </cofactor>
    <text evidence="2">Binds 2 [4Fe-4S] clusters per subunit.</text>
</comment>
<comment type="subunit">
    <text evidence="1 4 5 7">Core subunit of respiratory chain NADH dehydrogenase (Complex I) which is composed of 45 different subunits (PubMed:10852722, PubMed:18721790, PubMed:25209663). This is a component of the iron-sulfur (IP) fragment of the enzyme (PubMed:25209663). Interacts with RAB5IF (By similarity).</text>
</comment>
<comment type="subcellular location">
    <subcellularLocation>
        <location evidence="4 5 7">Mitochondrion inner membrane</location>
        <topology evidence="9">Peripheral membrane protein</topology>
        <orientation evidence="9">Matrix side</orientation>
    </subcellularLocation>
</comment>
<comment type="similarity">
    <text evidence="8">Belongs to the complex I 23 kDa subunit family.</text>
</comment>
<reference key="1">
    <citation type="journal article" date="1991" name="Biochemistry">
        <title>A homologue of a nuclear-coded iron-sulfur protein subunit of bovine mitochondrial complex I is encoded in chloroplast genomes.</title>
        <authorList>
            <person name="Dupuis A."/>
            <person name="Skehel J.M."/>
            <person name="Walker J.E."/>
        </authorList>
    </citation>
    <scope>NUCLEOTIDE SEQUENCE [MRNA]</scope>
    <scope>PROTEIN SEQUENCE OF 37-59</scope>
    <source>
        <tissue>Heart</tissue>
    </source>
</reference>
<reference key="2">
    <citation type="submission" date="2005-11" db="EMBL/GenBank/DDBJ databases">
        <authorList>
            <consortium name="NIH - Mammalian Gene Collection (MGC) project"/>
        </authorList>
    </citation>
    <scope>NUCLEOTIDE SEQUENCE [LARGE SCALE MRNA]</scope>
    <source>
        <strain>Crossbred X Angus</strain>
        <tissue>Liver</tissue>
    </source>
</reference>
<reference key="3">
    <citation type="journal article" date="2000" name="Biochemistry">
        <title>Resolution of the membrane domain of bovine complex I into subcomplexes: implications for the structural organization of the enzyme.</title>
        <authorList>
            <person name="Sazanov L.A."/>
            <person name="Peak-Chew S.Y."/>
            <person name="Fearnley I.M."/>
            <person name="Walker J.E."/>
        </authorList>
    </citation>
    <scope>PARTIAL PROTEIN SEQUENCE</scope>
    <scope>SUBUNIT</scope>
    <scope>IDENTIFICATION IN COMPLEX I</scope>
    <scope>SUBCELLULAR LOCATION</scope>
    <scope>FUNCTION</scope>
</reference>
<reference key="4">
    <citation type="journal article" date="2008" name="Anal. Biochem.">
        <title>Subunit analysis of bovine heart complex I by reversed-phase high-performance liquid chromatography, electrospray ionization-tandem mass spectrometry, and matrix-assisted laser desorption/ionization-time-of-flight mass spectrometry.</title>
        <authorList>
            <person name="Lemma-Gray P."/>
            <person name="Valusova E."/>
            <person name="Carroll C.A."/>
            <person name="Weintraub S.T."/>
            <person name="Musatov A."/>
            <person name="Robinson N.C."/>
        </authorList>
    </citation>
    <scope>FUNCTION</scope>
    <scope>SUBUNIT</scope>
    <scope>IDENTIFICATION IN COMPLEX I</scope>
    <scope>SUBCELLULAR LOCATION</scope>
</reference>
<reference key="5">
    <citation type="journal article" date="2014" name="Nature">
        <title>Architecture of mammalian respiratory complex I.</title>
        <authorList>
            <person name="Vinothkumar K.R."/>
            <person name="Zhu J."/>
            <person name="Hirst J."/>
        </authorList>
    </citation>
    <scope>SUBUNIT</scope>
    <scope>SUBCELLULAR LOCATION</scope>
    <scope>TOPOLOGY</scope>
</reference>
<dbReference type="EC" id="7.1.1.2" evidence="1"/>
<dbReference type="EMBL" id="M58717">
    <property type="protein sequence ID" value="AAA30664.1"/>
    <property type="molecule type" value="mRNA"/>
</dbReference>
<dbReference type="EMBL" id="BC109906">
    <property type="protein sequence ID" value="AAI09907.1"/>
    <property type="molecule type" value="mRNA"/>
</dbReference>
<dbReference type="PIR" id="A38409">
    <property type="entry name" value="A38409"/>
</dbReference>
<dbReference type="RefSeq" id="NP_001289598.1">
    <property type="nucleotide sequence ID" value="NM_001302669.1"/>
</dbReference>
<dbReference type="RefSeq" id="XP_005227041.1">
    <property type="nucleotide sequence ID" value="XM_005226984.3"/>
</dbReference>
<dbReference type="PDB" id="5LC5">
    <property type="method" value="EM"/>
    <property type="resolution" value="4.35 A"/>
    <property type="chains" value="I=37-212"/>
</dbReference>
<dbReference type="PDB" id="5LDW">
    <property type="method" value="EM"/>
    <property type="resolution" value="4.27 A"/>
    <property type="chains" value="I=37-212"/>
</dbReference>
<dbReference type="PDB" id="5LDX">
    <property type="method" value="EM"/>
    <property type="resolution" value="5.60 A"/>
    <property type="chains" value="I=37-212"/>
</dbReference>
<dbReference type="PDB" id="5LNK">
    <property type="method" value="EM"/>
    <property type="resolution" value="3.90 A"/>
    <property type="chains" value="9=37-212"/>
</dbReference>
<dbReference type="PDB" id="5O31">
    <property type="method" value="EM"/>
    <property type="resolution" value="4.13 A"/>
    <property type="chains" value="I=37-212"/>
</dbReference>
<dbReference type="PDB" id="7DGQ">
    <property type="method" value="EM"/>
    <property type="resolution" value="5.00 A"/>
    <property type="chains" value="E=37-212"/>
</dbReference>
<dbReference type="PDB" id="7DGR">
    <property type="method" value="EM"/>
    <property type="resolution" value="4.60 A"/>
    <property type="chains" value="E=37-212"/>
</dbReference>
<dbReference type="PDB" id="7DGS">
    <property type="method" value="EM"/>
    <property type="resolution" value="7.80 A"/>
    <property type="chains" value="E=37-212"/>
</dbReference>
<dbReference type="PDB" id="7DGZ">
    <property type="method" value="EM"/>
    <property type="resolution" value="3.80 A"/>
    <property type="chains" value="E=37-212"/>
</dbReference>
<dbReference type="PDB" id="7DH0">
    <property type="method" value="EM"/>
    <property type="resolution" value="4.20 A"/>
    <property type="chains" value="E=37-212"/>
</dbReference>
<dbReference type="PDB" id="7DKF">
    <property type="method" value="EM"/>
    <property type="resolution" value="8.30 A"/>
    <property type="chains" value="E2=37-212"/>
</dbReference>
<dbReference type="PDB" id="7QSD">
    <property type="method" value="EM"/>
    <property type="resolution" value="3.10 A"/>
    <property type="chains" value="I=1-212"/>
</dbReference>
<dbReference type="PDB" id="7QSK">
    <property type="method" value="EM"/>
    <property type="resolution" value="2.84 A"/>
    <property type="chains" value="I=1-212"/>
</dbReference>
<dbReference type="PDB" id="7QSL">
    <property type="method" value="EM"/>
    <property type="resolution" value="2.76 A"/>
    <property type="chains" value="I=1-212"/>
</dbReference>
<dbReference type="PDB" id="7QSM">
    <property type="method" value="EM"/>
    <property type="resolution" value="2.30 A"/>
    <property type="chains" value="I=1-212"/>
</dbReference>
<dbReference type="PDB" id="7QSN">
    <property type="method" value="EM"/>
    <property type="resolution" value="2.81 A"/>
    <property type="chains" value="I=1-212"/>
</dbReference>
<dbReference type="PDB" id="7QSO">
    <property type="method" value="EM"/>
    <property type="resolution" value="3.02 A"/>
    <property type="chains" value="I=1-212"/>
</dbReference>
<dbReference type="PDB" id="7R41">
    <property type="method" value="EM"/>
    <property type="resolution" value="2.30 A"/>
    <property type="chains" value="I=1-212"/>
</dbReference>
<dbReference type="PDB" id="7R42">
    <property type="method" value="EM"/>
    <property type="resolution" value="2.30 A"/>
    <property type="chains" value="I=1-212"/>
</dbReference>
<dbReference type="PDB" id="7R43">
    <property type="method" value="EM"/>
    <property type="resolution" value="2.40 A"/>
    <property type="chains" value="I=1-212"/>
</dbReference>
<dbReference type="PDB" id="7R44">
    <property type="method" value="EM"/>
    <property type="resolution" value="2.40 A"/>
    <property type="chains" value="I=1-212"/>
</dbReference>
<dbReference type="PDB" id="7R45">
    <property type="method" value="EM"/>
    <property type="resolution" value="2.40 A"/>
    <property type="chains" value="I=1-212"/>
</dbReference>
<dbReference type="PDB" id="7R46">
    <property type="method" value="EM"/>
    <property type="resolution" value="2.40 A"/>
    <property type="chains" value="I=1-212"/>
</dbReference>
<dbReference type="PDB" id="7R47">
    <property type="method" value="EM"/>
    <property type="resolution" value="2.30 A"/>
    <property type="chains" value="I=1-212"/>
</dbReference>
<dbReference type="PDB" id="7R48">
    <property type="method" value="EM"/>
    <property type="resolution" value="2.30 A"/>
    <property type="chains" value="I=1-212"/>
</dbReference>
<dbReference type="PDB" id="7R4C">
    <property type="method" value="EM"/>
    <property type="resolution" value="2.30 A"/>
    <property type="chains" value="I=1-212"/>
</dbReference>
<dbReference type="PDB" id="7R4D">
    <property type="method" value="EM"/>
    <property type="resolution" value="2.30 A"/>
    <property type="chains" value="I=1-212"/>
</dbReference>
<dbReference type="PDB" id="7R4F">
    <property type="method" value="EM"/>
    <property type="resolution" value="2.40 A"/>
    <property type="chains" value="I=1-212"/>
</dbReference>
<dbReference type="PDB" id="7R4G">
    <property type="method" value="EM"/>
    <property type="resolution" value="2.50 A"/>
    <property type="chains" value="I=1-212"/>
</dbReference>
<dbReference type="PDB" id="8Q0A">
    <property type="method" value="EM"/>
    <property type="resolution" value="3.10 A"/>
    <property type="chains" value="I=1-212"/>
</dbReference>
<dbReference type="PDB" id="8Q0F">
    <property type="method" value="EM"/>
    <property type="resolution" value="3.10 A"/>
    <property type="chains" value="I=1-212"/>
</dbReference>
<dbReference type="PDB" id="8Q0J">
    <property type="method" value="EM"/>
    <property type="resolution" value="3.80 A"/>
    <property type="chains" value="I=1-212"/>
</dbReference>
<dbReference type="PDB" id="8Q0M">
    <property type="method" value="EM"/>
    <property type="resolution" value="3.10 A"/>
    <property type="chains" value="I=1-212"/>
</dbReference>
<dbReference type="PDB" id="8Q0O">
    <property type="method" value="EM"/>
    <property type="resolution" value="3.10 A"/>
    <property type="chains" value="I=1-212"/>
</dbReference>
<dbReference type="PDB" id="8Q0Q">
    <property type="method" value="EM"/>
    <property type="resolution" value="3.60 A"/>
    <property type="chains" value="I=1-212"/>
</dbReference>
<dbReference type="PDB" id="8Q1P">
    <property type="method" value="EM"/>
    <property type="resolution" value="2.90 A"/>
    <property type="chains" value="I=1-212"/>
</dbReference>
<dbReference type="PDB" id="8Q1U">
    <property type="method" value="EM"/>
    <property type="resolution" value="3.30 A"/>
    <property type="chains" value="I=1-212"/>
</dbReference>
<dbReference type="PDB" id="8Q1Y">
    <property type="method" value="EM"/>
    <property type="resolution" value="2.60 A"/>
    <property type="chains" value="I=1-212"/>
</dbReference>
<dbReference type="PDB" id="8Q25">
    <property type="method" value="EM"/>
    <property type="resolution" value="2.80 A"/>
    <property type="chains" value="I=1-212"/>
</dbReference>
<dbReference type="PDB" id="8Q45">
    <property type="method" value="EM"/>
    <property type="resolution" value="2.70 A"/>
    <property type="chains" value="I=1-212"/>
</dbReference>
<dbReference type="PDB" id="8Q46">
    <property type="method" value="EM"/>
    <property type="resolution" value="2.60 A"/>
    <property type="chains" value="I=1-212"/>
</dbReference>
<dbReference type="PDB" id="8Q47">
    <property type="method" value="EM"/>
    <property type="resolution" value="2.90 A"/>
    <property type="chains" value="I=1-212"/>
</dbReference>
<dbReference type="PDB" id="8Q48">
    <property type="method" value="EM"/>
    <property type="resolution" value="2.50 A"/>
    <property type="chains" value="I=1-212"/>
</dbReference>
<dbReference type="PDB" id="8Q49">
    <property type="method" value="EM"/>
    <property type="resolution" value="2.60 A"/>
    <property type="chains" value="I=1-212"/>
</dbReference>
<dbReference type="PDB" id="8Q4A">
    <property type="method" value="EM"/>
    <property type="resolution" value="2.60 A"/>
    <property type="chains" value="I=1-212"/>
</dbReference>
<dbReference type="PDBsum" id="5LC5"/>
<dbReference type="PDBsum" id="5LDW"/>
<dbReference type="PDBsum" id="5LDX"/>
<dbReference type="PDBsum" id="5LNK"/>
<dbReference type="PDBsum" id="5O31"/>
<dbReference type="PDBsum" id="7DGQ"/>
<dbReference type="PDBsum" id="7DGR"/>
<dbReference type="PDBsum" id="7DGS"/>
<dbReference type="PDBsum" id="7DGZ"/>
<dbReference type="PDBsum" id="7DH0"/>
<dbReference type="PDBsum" id="7DKF"/>
<dbReference type="PDBsum" id="7QSD"/>
<dbReference type="PDBsum" id="7QSK"/>
<dbReference type="PDBsum" id="7QSL"/>
<dbReference type="PDBsum" id="7QSM"/>
<dbReference type="PDBsum" id="7QSN"/>
<dbReference type="PDBsum" id="7QSO"/>
<dbReference type="PDBsum" id="7R41"/>
<dbReference type="PDBsum" id="7R42"/>
<dbReference type="PDBsum" id="7R43"/>
<dbReference type="PDBsum" id="7R44"/>
<dbReference type="PDBsum" id="7R45"/>
<dbReference type="PDBsum" id="7R46"/>
<dbReference type="PDBsum" id="7R47"/>
<dbReference type="PDBsum" id="7R48"/>
<dbReference type="PDBsum" id="7R4C"/>
<dbReference type="PDBsum" id="7R4D"/>
<dbReference type="PDBsum" id="7R4F"/>
<dbReference type="PDBsum" id="7R4G"/>
<dbReference type="PDBsum" id="8Q0A"/>
<dbReference type="PDBsum" id="8Q0F"/>
<dbReference type="PDBsum" id="8Q0J"/>
<dbReference type="PDBsum" id="8Q0M"/>
<dbReference type="PDBsum" id="8Q0O"/>
<dbReference type="PDBsum" id="8Q0Q"/>
<dbReference type="PDBsum" id="8Q1P"/>
<dbReference type="PDBsum" id="8Q1U"/>
<dbReference type="PDBsum" id="8Q1Y"/>
<dbReference type="PDBsum" id="8Q25"/>
<dbReference type="PDBsum" id="8Q45"/>
<dbReference type="PDBsum" id="8Q46"/>
<dbReference type="PDBsum" id="8Q47"/>
<dbReference type="PDBsum" id="8Q48"/>
<dbReference type="PDBsum" id="8Q49"/>
<dbReference type="PDBsum" id="8Q4A"/>
<dbReference type="EMDB" id="EMD-14127"/>
<dbReference type="EMDB" id="EMD-14132"/>
<dbReference type="EMDB" id="EMD-14133"/>
<dbReference type="EMDB" id="EMD-14134"/>
<dbReference type="EMDB" id="EMD-14139"/>
<dbReference type="EMDB" id="EMD-14140"/>
<dbReference type="EMDB" id="EMD-14251"/>
<dbReference type="EMDB" id="EMD-14256"/>
<dbReference type="EMDB" id="EMD-14261"/>
<dbReference type="EMDB" id="EMD-14266"/>
<dbReference type="EMDB" id="EMD-14272"/>
<dbReference type="EMDB" id="EMD-14277"/>
<dbReference type="EMDB" id="EMD-14282"/>
<dbReference type="EMDB" id="EMD-14287"/>
<dbReference type="EMDB" id="EMD-14292"/>
<dbReference type="EMDB" id="EMD-14297"/>
<dbReference type="EMDB" id="EMD-14302"/>
<dbReference type="EMDB" id="EMD-14307"/>
<dbReference type="EMDB" id="EMD-18051"/>
<dbReference type="EMDB" id="EMD-18052"/>
<dbReference type="EMDB" id="EMD-18054"/>
<dbReference type="EMDB" id="EMD-18055"/>
<dbReference type="EMDB" id="EMD-18057"/>
<dbReference type="EMDB" id="EMD-18059"/>
<dbReference type="EMDB" id="EMD-18066"/>
<dbReference type="EMDB" id="EMD-18067"/>
<dbReference type="EMDB" id="EMD-18068"/>
<dbReference type="EMDB" id="EMD-18069"/>
<dbReference type="EMDB" id="EMD-18138"/>
<dbReference type="EMDB" id="EMD-18139"/>
<dbReference type="EMDB" id="EMD-18140"/>
<dbReference type="EMDB" id="EMD-18141"/>
<dbReference type="EMDB" id="EMD-18142"/>
<dbReference type="EMDB" id="EMD-18143"/>
<dbReference type="EMDB" id="EMD-30673"/>
<dbReference type="EMDB" id="EMD-30674"/>
<dbReference type="EMDB" id="EMD-30675"/>
<dbReference type="EMDB" id="EMD-30676"/>
<dbReference type="EMDB" id="EMD-30677"/>
<dbReference type="EMDB" id="EMD-30706"/>
<dbReference type="EMDB" id="EMD-3731"/>
<dbReference type="EMDB" id="EMD-4032"/>
<dbReference type="EMDB" id="EMD-4040"/>
<dbReference type="EMDB" id="EMD-4041"/>
<dbReference type="EMDB" id="EMD-4093"/>
<dbReference type="SMR" id="P42028"/>
<dbReference type="CORUM" id="P42028"/>
<dbReference type="DIP" id="DIP-38810N"/>
<dbReference type="FunCoup" id="P42028">
    <property type="interactions" value="2710"/>
</dbReference>
<dbReference type="IntAct" id="P42028">
    <property type="interactions" value="2"/>
</dbReference>
<dbReference type="STRING" id="9913.ENSBTAP00000016013"/>
<dbReference type="TCDB" id="3.D.1.6.1">
    <property type="family name" value="the h+ or na+-translocating nadh dehydrogenase (ndh) family"/>
</dbReference>
<dbReference type="PaxDb" id="9913-ENSBTAP00000016013"/>
<dbReference type="PeptideAtlas" id="P42028"/>
<dbReference type="GeneID" id="287027"/>
<dbReference type="KEGG" id="bta:287027"/>
<dbReference type="CTD" id="4728"/>
<dbReference type="VEuPathDB" id="HostDB:ENSBTAG00000012072"/>
<dbReference type="eggNOG" id="KOG3256">
    <property type="taxonomic scope" value="Eukaryota"/>
</dbReference>
<dbReference type="HOGENOM" id="CLU_067218_5_1_1"/>
<dbReference type="InParanoid" id="P42028"/>
<dbReference type="OrthoDB" id="204405at2759"/>
<dbReference type="TreeFam" id="TF105610"/>
<dbReference type="Reactome" id="R-BTA-611105">
    <property type="pathway name" value="Respiratory electron transport"/>
</dbReference>
<dbReference type="Reactome" id="R-BTA-6799198">
    <property type="pathway name" value="Complex I biogenesis"/>
</dbReference>
<dbReference type="Proteomes" id="UP000009136">
    <property type="component" value="Chromosome 29"/>
</dbReference>
<dbReference type="Bgee" id="ENSBTAG00000012072">
    <property type="expression patterns" value="Expressed in tongue muscle and 106 other cell types or tissues"/>
</dbReference>
<dbReference type="GO" id="GO:0005743">
    <property type="term" value="C:mitochondrial inner membrane"/>
    <property type="evidence" value="ECO:0000314"/>
    <property type="project" value="UniProtKB"/>
</dbReference>
<dbReference type="GO" id="GO:0045271">
    <property type="term" value="C:respiratory chain complex I"/>
    <property type="evidence" value="ECO:0000314"/>
    <property type="project" value="UniProtKB"/>
</dbReference>
<dbReference type="GO" id="GO:0051539">
    <property type="term" value="F:4 iron, 4 sulfur cluster binding"/>
    <property type="evidence" value="ECO:0007669"/>
    <property type="project" value="UniProtKB-KW"/>
</dbReference>
<dbReference type="GO" id="GO:0046872">
    <property type="term" value="F:metal ion binding"/>
    <property type="evidence" value="ECO:0007669"/>
    <property type="project" value="UniProtKB-KW"/>
</dbReference>
<dbReference type="GO" id="GO:0008137">
    <property type="term" value="F:NADH dehydrogenase (ubiquinone) activity"/>
    <property type="evidence" value="ECO:0000250"/>
    <property type="project" value="UniProtKB"/>
</dbReference>
<dbReference type="GO" id="GO:0006120">
    <property type="term" value="P:mitochondrial electron transport, NADH to ubiquinone"/>
    <property type="evidence" value="ECO:0000250"/>
    <property type="project" value="UniProtKB"/>
</dbReference>
<dbReference type="GO" id="GO:0032981">
    <property type="term" value="P:mitochondrial respiratory chain complex I assembly"/>
    <property type="evidence" value="ECO:0000250"/>
    <property type="project" value="UniProtKB"/>
</dbReference>
<dbReference type="FunFam" id="3.30.70.3270:FF:000001">
    <property type="entry name" value="NADH-quinone oxidoreductase subunit I 1"/>
    <property type="match status" value="1"/>
</dbReference>
<dbReference type="Gene3D" id="3.30.70.3270">
    <property type="match status" value="1"/>
</dbReference>
<dbReference type="HAMAP" id="MF_01351">
    <property type="entry name" value="NDH1_NuoI"/>
    <property type="match status" value="1"/>
</dbReference>
<dbReference type="InterPro" id="IPR017896">
    <property type="entry name" value="4Fe4S_Fe-S-bd"/>
</dbReference>
<dbReference type="InterPro" id="IPR017900">
    <property type="entry name" value="4Fe4S_Fe_S_CS"/>
</dbReference>
<dbReference type="InterPro" id="IPR010226">
    <property type="entry name" value="NADH_quinone_OxRdtase_chainI"/>
</dbReference>
<dbReference type="NCBIfam" id="TIGR01971">
    <property type="entry name" value="NuoI"/>
    <property type="match status" value="1"/>
</dbReference>
<dbReference type="NCBIfam" id="NF004538">
    <property type="entry name" value="PRK05888.1-4"/>
    <property type="match status" value="1"/>
</dbReference>
<dbReference type="NCBIfam" id="NF004539">
    <property type="entry name" value="PRK05888.1-5"/>
    <property type="match status" value="1"/>
</dbReference>
<dbReference type="PANTHER" id="PTHR10849:SF20">
    <property type="entry name" value="NADH DEHYDROGENASE [UBIQUINONE] IRON-SULFUR PROTEIN 8, MITOCHONDRIAL"/>
    <property type="match status" value="1"/>
</dbReference>
<dbReference type="PANTHER" id="PTHR10849">
    <property type="entry name" value="NADH DEHYDROGENASE UBIQUINONE IRON-SULFUR PROTEIN 8, MITOCHONDRIAL"/>
    <property type="match status" value="1"/>
</dbReference>
<dbReference type="Pfam" id="PF12838">
    <property type="entry name" value="Fer4_7"/>
    <property type="match status" value="1"/>
</dbReference>
<dbReference type="SUPFAM" id="SSF54862">
    <property type="entry name" value="4Fe-4S ferredoxins"/>
    <property type="match status" value="1"/>
</dbReference>
<dbReference type="PROSITE" id="PS00198">
    <property type="entry name" value="4FE4S_FER_1"/>
    <property type="match status" value="2"/>
</dbReference>
<dbReference type="PROSITE" id="PS51379">
    <property type="entry name" value="4FE4S_FER_2"/>
    <property type="match status" value="2"/>
</dbReference>
<gene>
    <name type="primary">NDUFS8</name>
</gene>